<sequence length="143" mass="16218">MPASKEQTDEMKEAFVLYDIDKDGLIPTSHVGSVLRSLGINVTDAELAKLSNELGDAIDEKKFMSFVSNKLRETESEEEYIKAFRVFDKDNSGYIETAKFADYMKTLGEKLSDNEVQLMVQEADPTNSGSFDYYDFVQRIMAK</sequence>
<evidence type="ECO:0000255" key="1"/>
<evidence type="ECO:0000255" key="2">
    <source>
        <dbReference type="PROSITE-ProRule" id="PRU00448"/>
    </source>
</evidence>
<evidence type="ECO:0000269" key="3">
    <source>
    </source>
</evidence>
<evidence type="ECO:0000269" key="4">
    <source>
    </source>
</evidence>
<evidence type="ECO:0000269" key="5">
    <source>
    </source>
</evidence>
<evidence type="ECO:0000269" key="6">
    <source>
    </source>
</evidence>
<evidence type="ECO:0000269" key="7">
    <source>
    </source>
</evidence>
<evidence type="ECO:0000305" key="8"/>
<evidence type="ECO:0000312" key="9">
    <source>
        <dbReference type="EMBL" id="CAB10132.1"/>
    </source>
</evidence>
<reference evidence="9" key="1">
    <citation type="journal article" date="2002" name="Nature">
        <title>The genome sequence of Schizosaccharomyces pombe.</title>
        <authorList>
            <person name="Wood V."/>
            <person name="Gwilliam R."/>
            <person name="Rajandream M.A."/>
            <person name="Lyne M.H."/>
            <person name="Lyne R."/>
            <person name="Stewart A."/>
            <person name="Sgouros J.G."/>
            <person name="Peat N."/>
            <person name="Hayles J."/>
            <person name="Baker S.G."/>
            <person name="Basham D."/>
            <person name="Bowman S."/>
            <person name="Brooks K."/>
            <person name="Brown D."/>
            <person name="Brown S."/>
            <person name="Chillingworth T."/>
            <person name="Churcher C.M."/>
            <person name="Collins M."/>
            <person name="Connor R."/>
            <person name="Cronin A."/>
            <person name="Davis P."/>
            <person name="Feltwell T."/>
            <person name="Fraser A."/>
            <person name="Gentles S."/>
            <person name="Goble A."/>
            <person name="Hamlin N."/>
            <person name="Harris D.E."/>
            <person name="Hidalgo J."/>
            <person name="Hodgson G."/>
            <person name="Holroyd S."/>
            <person name="Hornsby T."/>
            <person name="Howarth S."/>
            <person name="Huckle E.J."/>
            <person name="Hunt S."/>
            <person name="Jagels K."/>
            <person name="James K.D."/>
            <person name="Jones L."/>
            <person name="Jones M."/>
            <person name="Leather S."/>
            <person name="McDonald S."/>
            <person name="McLean J."/>
            <person name="Mooney P."/>
            <person name="Moule S."/>
            <person name="Mungall K.L."/>
            <person name="Murphy L.D."/>
            <person name="Niblett D."/>
            <person name="Odell C."/>
            <person name="Oliver K."/>
            <person name="O'Neil S."/>
            <person name="Pearson D."/>
            <person name="Quail M.A."/>
            <person name="Rabbinowitsch E."/>
            <person name="Rutherford K.M."/>
            <person name="Rutter S."/>
            <person name="Saunders D."/>
            <person name="Seeger K."/>
            <person name="Sharp S."/>
            <person name="Skelton J."/>
            <person name="Simmonds M.N."/>
            <person name="Squares R."/>
            <person name="Squares S."/>
            <person name="Stevens K."/>
            <person name="Taylor K."/>
            <person name="Taylor R.G."/>
            <person name="Tivey A."/>
            <person name="Walsh S.V."/>
            <person name="Warren T."/>
            <person name="Whitehead S."/>
            <person name="Woodward J.R."/>
            <person name="Volckaert G."/>
            <person name="Aert R."/>
            <person name="Robben J."/>
            <person name="Grymonprez B."/>
            <person name="Weltjens I."/>
            <person name="Vanstreels E."/>
            <person name="Rieger M."/>
            <person name="Schaefer M."/>
            <person name="Mueller-Auer S."/>
            <person name="Gabel C."/>
            <person name="Fuchs M."/>
            <person name="Duesterhoeft A."/>
            <person name="Fritzc C."/>
            <person name="Holzer E."/>
            <person name="Moestl D."/>
            <person name="Hilbert H."/>
            <person name="Borzym K."/>
            <person name="Langer I."/>
            <person name="Beck A."/>
            <person name="Lehrach H."/>
            <person name="Reinhardt R."/>
            <person name="Pohl T.M."/>
            <person name="Eger P."/>
            <person name="Zimmermann W."/>
            <person name="Wedler H."/>
            <person name="Wambutt R."/>
            <person name="Purnelle B."/>
            <person name="Goffeau A."/>
            <person name="Cadieu E."/>
            <person name="Dreano S."/>
            <person name="Gloux S."/>
            <person name="Lelaure V."/>
            <person name="Mottier S."/>
            <person name="Galibert F."/>
            <person name="Aves S.J."/>
            <person name="Xiang Z."/>
            <person name="Hunt C."/>
            <person name="Moore K."/>
            <person name="Hurst S.M."/>
            <person name="Lucas M."/>
            <person name="Rochet M."/>
            <person name="Gaillardin C."/>
            <person name="Tallada V.A."/>
            <person name="Garzon A."/>
            <person name="Thode G."/>
            <person name="Daga R.R."/>
            <person name="Cruzado L."/>
            <person name="Jimenez J."/>
            <person name="Sanchez M."/>
            <person name="del Rey F."/>
            <person name="Benito J."/>
            <person name="Dominguez A."/>
            <person name="Revuelta J.L."/>
            <person name="Moreno S."/>
            <person name="Armstrong J."/>
            <person name="Forsburg S.L."/>
            <person name="Cerutti L."/>
            <person name="Lowe T."/>
            <person name="McCombie W.R."/>
            <person name="Paulsen I."/>
            <person name="Potashkin J."/>
            <person name="Shpakovski G.V."/>
            <person name="Ussery D."/>
            <person name="Barrell B.G."/>
            <person name="Nurse P."/>
        </authorList>
    </citation>
    <scope>NUCLEOTIDE SEQUENCE [LARGE SCALE GENOMIC DNA]</scope>
    <source>
        <strain>972 / ATCC 24843</strain>
    </source>
</reference>
<reference evidence="8" key="2">
    <citation type="journal article" date="2002" name="Nat. Genet.">
        <title>The transcriptional program of meiosis and sporulation in fission yeast.</title>
        <authorList>
            <person name="Mata J."/>
            <person name="Lyne R."/>
            <person name="Burns G."/>
            <person name="Baehler J."/>
        </authorList>
    </citation>
    <scope>FUNCTION</scope>
</reference>
<reference evidence="8" key="3">
    <citation type="journal article" date="2004" name="J. Cell Biol.">
        <title>UCS protein Rng3p activates actin filament gliding by fission yeast myosin-II.</title>
        <authorList>
            <person name="Lord M."/>
            <person name="Pollard T.D."/>
        </authorList>
    </citation>
    <scope>GENE NAME</scope>
    <scope>INTERACTION WITH MYO1</scope>
</reference>
<reference evidence="8" key="4">
    <citation type="journal article" date="2006" name="Cell Struct. Funct.">
        <title>Localization of type I myosin and F-actin to the leading edge region of the forespore membrane in Schizosaccharomyces pombe.</title>
        <authorList>
            <person name="Itadani A."/>
            <person name="Nakamura T."/>
            <person name="Shimoda C."/>
        </authorList>
    </citation>
    <scope>FUNCTION</scope>
    <scope>SUBCELLULAR LOCATION</scope>
    <scope>INDUCTION</scope>
    <scope>DISRUPTION PHENOTYPE</scope>
</reference>
<reference evidence="8" key="5">
    <citation type="journal article" date="2006" name="Nat. Biotechnol.">
        <title>ORFeome cloning and global analysis of protein localization in the fission yeast Schizosaccharomyces pombe.</title>
        <authorList>
            <person name="Matsuyama A."/>
            <person name="Arai R."/>
            <person name="Yashiroda Y."/>
            <person name="Shirai A."/>
            <person name="Kamata A."/>
            <person name="Sekido S."/>
            <person name="Kobayashi Y."/>
            <person name="Hashimoto A."/>
            <person name="Hamamoto M."/>
            <person name="Hiraoka Y."/>
            <person name="Horinouchi S."/>
            <person name="Yoshida M."/>
        </authorList>
    </citation>
    <scope>SUBCELLULAR LOCATION [LARGE SCALE ANALYSIS]</scope>
</reference>
<reference key="6">
    <citation type="journal article" date="2011" name="J. Cell Sci.">
        <title>A calmodulin-related light chain from fission yeast that functions with myosin-I and PI 4-kinase.</title>
        <authorList>
            <person name="Sammons M.R."/>
            <person name="James M.L."/>
            <person name="Clayton J.E."/>
            <person name="Sladewski T.E."/>
            <person name="Sirotkin V."/>
            <person name="Lord M."/>
        </authorList>
    </citation>
    <scope>FUNCTION</scope>
    <scope>INTERACTION WITH PIK1</scope>
</reference>
<protein>
    <recommendedName>
        <fullName>Myosin 1 light chain cam2</fullName>
    </recommendedName>
    <alternativeName>
        <fullName>Calmodulin-2</fullName>
    </alternativeName>
</protein>
<dbReference type="EMBL" id="CU329670">
    <property type="protein sequence ID" value="CAB10132.1"/>
    <property type="molecule type" value="Genomic_DNA"/>
</dbReference>
<dbReference type="PIR" id="T38484">
    <property type="entry name" value="T38484"/>
</dbReference>
<dbReference type="RefSeq" id="NP_594877.1">
    <property type="nucleotide sequence ID" value="NM_001020306.2"/>
</dbReference>
<dbReference type="SMR" id="O14008"/>
<dbReference type="BioGRID" id="279065">
    <property type="interactions" value="12"/>
</dbReference>
<dbReference type="FunCoup" id="O14008">
    <property type="interactions" value="27"/>
</dbReference>
<dbReference type="STRING" id="284812.O14008"/>
<dbReference type="iPTMnet" id="O14008"/>
<dbReference type="PaxDb" id="4896-SPAC29A4.05.1"/>
<dbReference type="EnsemblFungi" id="SPAC29A4.05.1">
    <property type="protein sequence ID" value="SPAC29A4.05.1:pep"/>
    <property type="gene ID" value="SPAC29A4.05"/>
</dbReference>
<dbReference type="GeneID" id="2542611"/>
<dbReference type="KEGG" id="spo:2542611"/>
<dbReference type="PomBase" id="SPAC29A4.05">
    <property type="gene designation" value="cam2"/>
</dbReference>
<dbReference type="VEuPathDB" id="FungiDB:SPAC29A4.05"/>
<dbReference type="eggNOG" id="KOG0027">
    <property type="taxonomic scope" value="Eukaryota"/>
</dbReference>
<dbReference type="HOGENOM" id="CLU_061288_2_0_1"/>
<dbReference type="InParanoid" id="O14008"/>
<dbReference type="OMA" id="EFVQRIM"/>
<dbReference type="PhylomeDB" id="O14008"/>
<dbReference type="Reactome" id="R-SPO-111932">
    <property type="pathway name" value="CaMK IV-mediated phosphorylation of CREB"/>
</dbReference>
<dbReference type="Reactome" id="R-SPO-114608">
    <property type="pathway name" value="Platelet degranulation"/>
</dbReference>
<dbReference type="Reactome" id="R-SPO-1474151">
    <property type="pathway name" value="Tetrahydrobiopterin (BH4) synthesis, recycling, salvage and regulation"/>
</dbReference>
<dbReference type="Reactome" id="R-SPO-203615">
    <property type="pathway name" value="eNOS activation"/>
</dbReference>
<dbReference type="Reactome" id="R-SPO-2871809">
    <property type="pathway name" value="FCERI mediated Ca+2 mobilization"/>
</dbReference>
<dbReference type="Reactome" id="R-SPO-4086398">
    <property type="pathway name" value="Ca2+ pathway"/>
</dbReference>
<dbReference type="Reactome" id="R-SPO-442729">
    <property type="pathway name" value="CREB1 phosphorylation through the activation of CaMKII/CaMKK/CaMKIV cascasde"/>
</dbReference>
<dbReference type="Reactome" id="R-SPO-5218920">
    <property type="pathway name" value="VEGFR2 mediated vascular permeability"/>
</dbReference>
<dbReference type="Reactome" id="R-SPO-5607763">
    <property type="pathway name" value="CLEC7A (Dectin-1) induces NFAT activation"/>
</dbReference>
<dbReference type="Reactome" id="R-SPO-5626467">
    <property type="pathway name" value="RHO GTPases activate IQGAPs"/>
</dbReference>
<dbReference type="Reactome" id="R-SPO-6798695">
    <property type="pathway name" value="Neutrophil degranulation"/>
</dbReference>
<dbReference type="Reactome" id="R-SPO-9009391">
    <property type="pathway name" value="Extra-nuclear estrogen signaling"/>
</dbReference>
<dbReference type="Reactome" id="R-SPO-9619229">
    <property type="pathway name" value="Activation of RAC1 downstream of NMDARs"/>
</dbReference>
<dbReference type="PRO" id="PR:O14008"/>
<dbReference type="Proteomes" id="UP000002485">
    <property type="component" value="Chromosome I"/>
</dbReference>
<dbReference type="GO" id="GO:0005938">
    <property type="term" value="C:cell cortex"/>
    <property type="evidence" value="ECO:0000314"/>
    <property type="project" value="PomBase"/>
</dbReference>
<dbReference type="GO" id="GO:0051285">
    <property type="term" value="C:cell cortex of cell tip"/>
    <property type="evidence" value="ECO:0000314"/>
    <property type="project" value="PomBase"/>
</dbReference>
<dbReference type="GO" id="GO:0051286">
    <property type="term" value="C:cell tip"/>
    <property type="evidence" value="ECO:0000318"/>
    <property type="project" value="GO_Central"/>
</dbReference>
<dbReference type="GO" id="GO:0030863">
    <property type="term" value="C:cortical cytoskeleton"/>
    <property type="evidence" value="ECO:0000314"/>
    <property type="project" value="PomBase"/>
</dbReference>
<dbReference type="GO" id="GO:0005737">
    <property type="term" value="C:cytoplasm"/>
    <property type="evidence" value="ECO:0000314"/>
    <property type="project" value="PomBase"/>
</dbReference>
<dbReference type="GO" id="GO:0005829">
    <property type="term" value="C:cytosol"/>
    <property type="evidence" value="ECO:0007005"/>
    <property type="project" value="PomBase"/>
</dbReference>
<dbReference type="GO" id="GO:1990819">
    <property type="term" value="C:mating projection actin fusion focus"/>
    <property type="evidence" value="ECO:0000314"/>
    <property type="project" value="PomBase"/>
</dbReference>
<dbReference type="GO" id="GO:0043332">
    <property type="term" value="C:mating projection tip"/>
    <property type="evidence" value="ECO:0000314"/>
    <property type="project" value="PomBase"/>
</dbReference>
<dbReference type="GO" id="GO:0031097">
    <property type="term" value="C:medial cortex"/>
    <property type="evidence" value="ECO:0000314"/>
    <property type="project" value="PomBase"/>
</dbReference>
<dbReference type="GO" id="GO:0045160">
    <property type="term" value="C:myosin I complex"/>
    <property type="evidence" value="ECO:0000314"/>
    <property type="project" value="PomBase"/>
</dbReference>
<dbReference type="GO" id="GO:0005628">
    <property type="term" value="C:prospore membrane"/>
    <property type="evidence" value="ECO:0000314"/>
    <property type="project" value="PomBase"/>
</dbReference>
<dbReference type="GO" id="GO:0005509">
    <property type="term" value="F:calcium ion binding"/>
    <property type="evidence" value="ECO:0000318"/>
    <property type="project" value="GO_Central"/>
</dbReference>
<dbReference type="GO" id="GO:0030234">
    <property type="term" value="F:enzyme regulator activity"/>
    <property type="evidence" value="ECO:0000353"/>
    <property type="project" value="PomBase"/>
</dbReference>
<dbReference type="GO" id="GO:0030036">
    <property type="term" value="P:actin cytoskeleton organization"/>
    <property type="evidence" value="ECO:0000315"/>
    <property type="project" value="PomBase"/>
</dbReference>
<dbReference type="GO" id="GO:0030437">
    <property type="term" value="P:ascospore formation"/>
    <property type="evidence" value="ECO:0000315"/>
    <property type="project" value="PomBase"/>
</dbReference>
<dbReference type="GO" id="GO:0032120">
    <property type="term" value="P:ascospore-type prospore membrane formation"/>
    <property type="evidence" value="ECO:0000315"/>
    <property type="project" value="PomBase"/>
</dbReference>
<dbReference type="GO" id="GO:0000226">
    <property type="term" value="P:microtubule cytoskeleton organization"/>
    <property type="evidence" value="ECO:0000318"/>
    <property type="project" value="GO_Central"/>
</dbReference>
<dbReference type="GO" id="GO:0051300">
    <property type="term" value="P:spindle pole body organization"/>
    <property type="evidence" value="ECO:0000318"/>
    <property type="project" value="GO_Central"/>
</dbReference>
<dbReference type="CDD" id="cd00051">
    <property type="entry name" value="EFh"/>
    <property type="match status" value="1"/>
</dbReference>
<dbReference type="FunFam" id="1.10.238.10:FF:000001">
    <property type="entry name" value="Calmodulin 1"/>
    <property type="match status" value="1"/>
</dbReference>
<dbReference type="Gene3D" id="1.10.238.10">
    <property type="entry name" value="EF-hand"/>
    <property type="match status" value="2"/>
</dbReference>
<dbReference type="InterPro" id="IPR050230">
    <property type="entry name" value="CALM/Myosin/TropC-like"/>
</dbReference>
<dbReference type="InterPro" id="IPR011992">
    <property type="entry name" value="EF-hand-dom_pair"/>
</dbReference>
<dbReference type="InterPro" id="IPR002048">
    <property type="entry name" value="EF_hand_dom"/>
</dbReference>
<dbReference type="PANTHER" id="PTHR23048:SF0">
    <property type="entry name" value="CALMODULIN LIKE 3"/>
    <property type="match status" value="1"/>
</dbReference>
<dbReference type="PANTHER" id="PTHR23048">
    <property type="entry name" value="MYOSIN LIGHT CHAIN 1, 3"/>
    <property type="match status" value="1"/>
</dbReference>
<dbReference type="Pfam" id="PF13499">
    <property type="entry name" value="EF-hand_7"/>
    <property type="match status" value="1"/>
</dbReference>
<dbReference type="SMART" id="SM00054">
    <property type="entry name" value="EFh"/>
    <property type="match status" value="3"/>
</dbReference>
<dbReference type="SUPFAM" id="SSF47473">
    <property type="entry name" value="EF-hand"/>
    <property type="match status" value="1"/>
</dbReference>
<dbReference type="PROSITE" id="PS50222">
    <property type="entry name" value="EF_HAND_2"/>
    <property type="match status" value="3"/>
</dbReference>
<name>CAM2_SCHPO</name>
<accession>O14008</accession>
<gene>
    <name evidence="9" type="primary">cam2</name>
    <name type="ORF">SPAC29A4.05</name>
</gene>
<organism>
    <name type="scientific">Schizosaccharomyces pombe (strain 972 / ATCC 24843)</name>
    <name type="common">Fission yeast</name>
    <dbReference type="NCBI Taxonomy" id="284812"/>
    <lineage>
        <taxon>Eukaryota</taxon>
        <taxon>Fungi</taxon>
        <taxon>Dikarya</taxon>
        <taxon>Ascomycota</taxon>
        <taxon>Taphrinomycotina</taxon>
        <taxon>Schizosaccharomycetes</taxon>
        <taxon>Schizosaccharomycetales</taxon>
        <taxon>Schizosaccharomycetaceae</taxon>
        <taxon>Schizosaccharomyces</taxon>
    </lineage>
</organism>
<comment type="function">
    <text evidence="3 6 7">Plays a role in meiosis and sporulation.</text>
</comment>
<comment type="subunit">
    <text evidence="4 7">Interacts with myo1 and pik1.</text>
</comment>
<comment type="subcellular location">
    <subcellularLocation>
        <location evidence="5 6">Cytoplasm</location>
    </subcellularLocation>
    <subcellularLocation>
        <location>Prospore membrane</location>
    </subcellularLocation>
    <text evidence="5 6">Accumulates at the cell poles in interphase cells and at the medial septation site in post-mitotic cells, colocalizing with myo1 and F-actin patches. During the mating process, a single dot is detected a the tip of the mating projection. During meiosis I, dots disperse into the cell periphery and the cytoplasm. At metaphase II, intense signals appear near meu14 rings which are formed at the leading edge of expanding forespore membranes. Localization is dependent upon myo1 with the exception of the localization to mating projections.</text>
</comment>
<comment type="induction">
    <text evidence="6">Five-fold increase in meiosis in mei4-dependent manner.</text>
</comment>
<comment type="disruption phenotype">
    <text evidence="6">Cells are viable and complete sporulation normally at 28 degrees Celsius, but form four-spored asci poorly at 34 degrees Celsius. In sporulation-defective cells, the forespore membrane (FSM) is formed abnormally and F-actin localization is aberrant. Only fragmented or anucleated FSMs are formed and F-actin dots remain at peripheral regions of mother cells even during meiosis II. Sporulation defect is alleviated by overexpressing myo1 from which IQ domain is deleted.</text>
</comment>
<comment type="similarity">
    <text evidence="1">Belongs to the calmodulin family.</text>
</comment>
<keyword id="KW-0963">Cytoplasm</keyword>
<keyword id="KW-0469">Meiosis</keyword>
<keyword id="KW-0472">Membrane</keyword>
<keyword id="KW-1185">Reference proteome</keyword>
<keyword id="KW-0677">Repeat</keyword>
<keyword id="KW-0749">Sporulation</keyword>
<feature type="chain" id="PRO_0000334492" description="Myosin 1 light chain cam2">
    <location>
        <begin position="1"/>
        <end position="143"/>
    </location>
</feature>
<feature type="domain" description="EF-hand 1" evidence="2">
    <location>
        <begin position="6"/>
        <end position="41"/>
    </location>
</feature>
<feature type="domain" description="EF-hand 2" evidence="2">
    <location>
        <begin position="75"/>
        <end position="110"/>
    </location>
</feature>
<feature type="domain" description="EF-hand 3" evidence="2">
    <location>
        <begin position="111"/>
        <end position="143"/>
    </location>
</feature>
<proteinExistence type="evidence at protein level"/>